<accession>Q54KA1</accession>
<gene>
    <name type="ORF">DDB_G0287499</name>
</gene>
<organism>
    <name type="scientific">Dictyostelium discoideum</name>
    <name type="common">Social amoeba</name>
    <dbReference type="NCBI Taxonomy" id="44689"/>
    <lineage>
        <taxon>Eukaryota</taxon>
        <taxon>Amoebozoa</taxon>
        <taxon>Evosea</taxon>
        <taxon>Eumycetozoa</taxon>
        <taxon>Dictyostelia</taxon>
        <taxon>Dictyosteliales</taxon>
        <taxon>Dictyosteliaceae</taxon>
        <taxon>Dictyostelium</taxon>
    </lineage>
</organism>
<sequence length="374" mass="43351">MEGNNNNEIIEKEEDLFQNIIKSTTDNKQRFNLFTKEIQKQYELTLSSNENSVKGLDWIINTLKQAYTHQNSKDDKKRLLQWILKNLIIQVKSLRLKYSLINNTTDNNNNNNNENNNDNNIDTVKEKRLINKLWEYQVQIIIRLEYLNLKEDLFPTTVSKGDDDDNNSGNQSSIDNLVSLLQDASFLMDSTSIISEGTTTTTNNNNNNNNNNNNNNNNGTNITTDSVRNKGCTDFLDKVILKRFLNLRKVLTKIYGSLEISKPLELKKDKNKFNNNNNKGNLKDLIVPTKENIESTLSINLDEVSDCNDINTNLKKKRKQQEQLQIEKEKKLLTIQQEQTKIPKDLFKKVNVKKLNHFTMSLSNPEKSFKTIKM</sequence>
<evidence type="ECO:0000255" key="1"/>
<evidence type="ECO:0000256" key="2">
    <source>
        <dbReference type="SAM" id="MobiDB-lite"/>
    </source>
</evidence>
<reference key="1">
    <citation type="journal article" date="2005" name="Nature">
        <title>The genome of the social amoeba Dictyostelium discoideum.</title>
        <authorList>
            <person name="Eichinger L."/>
            <person name="Pachebat J.A."/>
            <person name="Gloeckner G."/>
            <person name="Rajandream M.A."/>
            <person name="Sucgang R."/>
            <person name="Berriman M."/>
            <person name="Song J."/>
            <person name="Olsen R."/>
            <person name="Szafranski K."/>
            <person name="Xu Q."/>
            <person name="Tunggal B."/>
            <person name="Kummerfeld S."/>
            <person name="Madera M."/>
            <person name="Konfortov B.A."/>
            <person name="Rivero F."/>
            <person name="Bankier A.T."/>
            <person name="Lehmann R."/>
            <person name="Hamlin N."/>
            <person name="Davies R."/>
            <person name="Gaudet P."/>
            <person name="Fey P."/>
            <person name="Pilcher K."/>
            <person name="Chen G."/>
            <person name="Saunders D."/>
            <person name="Sodergren E.J."/>
            <person name="Davis P."/>
            <person name="Kerhornou A."/>
            <person name="Nie X."/>
            <person name="Hall N."/>
            <person name="Anjard C."/>
            <person name="Hemphill L."/>
            <person name="Bason N."/>
            <person name="Farbrother P."/>
            <person name="Desany B."/>
            <person name="Just E."/>
            <person name="Morio T."/>
            <person name="Rost R."/>
            <person name="Churcher C.M."/>
            <person name="Cooper J."/>
            <person name="Haydock S."/>
            <person name="van Driessche N."/>
            <person name="Cronin A."/>
            <person name="Goodhead I."/>
            <person name="Muzny D.M."/>
            <person name="Mourier T."/>
            <person name="Pain A."/>
            <person name="Lu M."/>
            <person name="Harper D."/>
            <person name="Lindsay R."/>
            <person name="Hauser H."/>
            <person name="James K.D."/>
            <person name="Quiles M."/>
            <person name="Madan Babu M."/>
            <person name="Saito T."/>
            <person name="Buchrieser C."/>
            <person name="Wardroper A."/>
            <person name="Felder M."/>
            <person name="Thangavelu M."/>
            <person name="Johnson D."/>
            <person name="Knights A."/>
            <person name="Loulseged H."/>
            <person name="Mungall K.L."/>
            <person name="Oliver K."/>
            <person name="Price C."/>
            <person name="Quail M.A."/>
            <person name="Urushihara H."/>
            <person name="Hernandez J."/>
            <person name="Rabbinowitsch E."/>
            <person name="Steffen D."/>
            <person name="Sanders M."/>
            <person name="Ma J."/>
            <person name="Kohara Y."/>
            <person name="Sharp S."/>
            <person name="Simmonds M.N."/>
            <person name="Spiegler S."/>
            <person name="Tivey A."/>
            <person name="Sugano S."/>
            <person name="White B."/>
            <person name="Walker D."/>
            <person name="Woodward J.R."/>
            <person name="Winckler T."/>
            <person name="Tanaka Y."/>
            <person name="Shaulsky G."/>
            <person name="Schleicher M."/>
            <person name="Weinstock G.M."/>
            <person name="Rosenthal A."/>
            <person name="Cox E.C."/>
            <person name="Chisholm R.L."/>
            <person name="Gibbs R.A."/>
            <person name="Loomis W.F."/>
            <person name="Platzer M."/>
            <person name="Kay R.R."/>
            <person name="Williams J.G."/>
            <person name="Dear P.H."/>
            <person name="Noegel A.A."/>
            <person name="Barrell B.G."/>
            <person name="Kuspa A."/>
        </authorList>
    </citation>
    <scope>NUCLEOTIDE SEQUENCE [LARGE SCALE GENOMIC DNA]</scope>
    <source>
        <strain>AX4</strain>
    </source>
</reference>
<name>Y7495_DICDI</name>
<dbReference type="EMBL" id="AAFI02000102">
    <property type="protein sequence ID" value="EAL63692.1"/>
    <property type="molecule type" value="Genomic_DNA"/>
</dbReference>
<dbReference type="RefSeq" id="XP_637197.1">
    <property type="nucleotide sequence ID" value="XM_632105.1"/>
</dbReference>
<dbReference type="SMR" id="Q54KA1"/>
<dbReference type="FunCoup" id="Q54KA1">
    <property type="interactions" value="435"/>
</dbReference>
<dbReference type="PaxDb" id="44689-DDB0187495"/>
<dbReference type="EnsemblProtists" id="EAL63692">
    <property type="protein sequence ID" value="EAL63692"/>
    <property type="gene ID" value="DDB_G0287499"/>
</dbReference>
<dbReference type="GeneID" id="8626155"/>
<dbReference type="KEGG" id="ddi:DDB_G0287499"/>
<dbReference type="dictyBase" id="DDB_G0287499"/>
<dbReference type="VEuPathDB" id="AmoebaDB:DDB_G0287499"/>
<dbReference type="eggNOG" id="ENOG502RHPV">
    <property type="taxonomic scope" value="Eukaryota"/>
</dbReference>
<dbReference type="HOGENOM" id="CLU_740652_0_0_1"/>
<dbReference type="InParanoid" id="Q54KA1"/>
<dbReference type="OMA" id="LNHFTMS"/>
<dbReference type="PRO" id="PR:Q54KA1"/>
<dbReference type="Proteomes" id="UP000002195">
    <property type="component" value="Chromosome 5"/>
</dbReference>
<keyword id="KW-0175">Coiled coil</keyword>
<keyword id="KW-1185">Reference proteome</keyword>
<feature type="chain" id="PRO_0000347022" description="Uncharacterized protein DDB_G0287499">
    <location>
        <begin position="1"/>
        <end position="374"/>
    </location>
</feature>
<feature type="region of interest" description="Disordered" evidence="2">
    <location>
        <begin position="197"/>
        <end position="223"/>
    </location>
</feature>
<feature type="coiled-coil region" evidence="1">
    <location>
        <begin position="302"/>
        <end position="342"/>
    </location>
</feature>
<feature type="compositionally biased region" description="Low complexity" evidence="2">
    <location>
        <begin position="198"/>
        <end position="223"/>
    </location>
</feature>
<protein>
    <recommendedName>
        <fullName>Uncharacterized protein DDB_G0287499</fullName>
    </recommendedName>
</protein>
<proteinExistence type="predicted"/>